<sequence>MSEKNAYAKSGVDVEAGYEVVERIKKHVARTERAGVMGVLGGFGGMFDLSKTGVKEPVLVSGTDGVGTKLMLAIKYDKHDTIGQDCVAMCVNDIIAAGAEPLYFLDYIATGKNNPVKLEEVVSGVAEGCVQAGVALIGGETAEMPGMYGEDDYDLAGFAVGVAEKSQIIDGSKVKEGDILLGLASSGIHSNGYSLVRRVFADYTGKELLPELEGKQLKDVLLEPTRIYVKAALPLIKEELVNGIGHITGGGFIENVPRMFADDLAAEIDEDKVPVLPIFKALEKYGDIKHEEMFEIFNMGVGLMLAVSPENVNRVKELLDEPVYEIGRIIKKADASVVIK</sequence>
<protein>
    <recommendedName>
        <fullName evidence="1">Phosphoribosylformylglycinamidine cyclo-ligase</fullName>
        <ecNumber evidence="1">6.3.3.1</ecNumber>
    </recommendedName>
    <alternativeName>
        <fullName evidence="1">AIR synthase</fullName>
    </alternativeName>
    <alternativeName>
        <fullName evidence="1">AIRS</fullName>
    </alternativeName>
    <alternativeName>
        <fullName evidence="1">Phosphoribosyl-aminoimidazole synthetase</fullName>
    </alternativeName>
</protein>
<dbReference type="EC" id="6.3.3.1" evidence="1"/>
<dbReference type="EMBL" id="BA000034">
    <property type="protein sequence ID" value="BAC63118.1"/>
    <property type="molecule type" value="Genomic_DNA"/>
</dbReference>
<dbReference type="RefSeq" id="WP_009880322.1">
    <property type="nucleotide sequence ID" value="NC_004606.1"/>
</dbReference>
<dbReference type="SMR" id="P0DD63"/>
<dbReference type="KEGG" id="sps:SPs0023"/>
<dbReference type="HOGENOM" id="CLU_047116_0_0_9"/>
<dbReference type="UniPathway" id="UPA00074">
    <property type="reaction ID" value="UER00129"/>
</dbReference>
<dbReference type="GO" id="GO:0005829">
    <property type="term" value="C:cytosol"/>
    <property type="evidence" value="ECO:0007669"/>
    <property type="project" value="TreeGrafter"/>
</dbReference>
<dbReference type="GO" id="GO:0005524">
    <property type="term" value="F:ATP binding"/>
    <property type="evidence" value="ECO:0007669"/>
    <property type="project" value="UniProtKB-KW"/>
</dbReference>
<dbReference type="GO" id="GO:0004637">
    <property type="term" value="F:phosphoribosylamine-glycine ligase activity"/>
    <property type="evidence" value="ECO:0007669"/>
    <property type="project" value="TreeGrafter"/>
</dbReference>
<dbReference type="GO" id="GO:0004641">
    <property type="term" value="F:phosphoribosylformylglycinamidine cyclo-ligase activity"/>
    <property type="evidence" value="ECO:0007669"/>
    <property type="project" value="UniProtKB-UniRule"/>
</dbReference>
<dbReference type="GO" id="GO:0006189">
    <property type="term" value="P:'de novo' IMP biosynthetic process"/>
    <property type="evidence" value="ECO:0007669"/>
    <property type="project" value="UniProtKB-UniRule"/>
</dbReference>
<dbReference type="GO" id="GO:0046084">
    <property type="term" value="P:adenine biosynthetic process"/>
    <property type="evidence" value="ECO:0007669"/>
    <property type="project" value="TreeGrafter"/>
</dbReference>
<dbReference type="CDD" id="cd02196">
    <property type="entry name" value="PurM"/>
    <property type="match status" value="1"/>
</dbReference>
<dbReference type="FunFam" id="3.30.1330.10:FF:000001">
    <property type="entry name" value="Phosphoribosylformylglycinamidine cyclo-ligase"/>
    <property type="match status" value="1"/>
</dbReference>
<dbReference type="FunFam" id="3.90.650.10:FF:000011">
    <property type="entry name" value="Phosphoribosylformylglycinamidine cyclo-ligase"/>
    <property type="match status" value="1"/>
</dbReference>
<dbReference type="Gene3D" id="3.90.650.10">
    <property type="entry name" value="PurM-like C-terminal domain"/>
    <property type="match status" value="1"/>
</dbReference>
<dbReference type="Gene3D" id="3.30.1330.10">
    <property type="entry name" value="PurM-like, N-terminal domain"/>
    <property type="match status" value="1"/>
</dbReference>
<dbReference type="HAMAP" id="MF_00741">
    <property type="entry name" value="AIRS"/>
    <property type="match status" value="1"/>
</dbReference>
<dbReference type="InterPro" id="IPR010918">
    <property type="entry name" value="PurM-like_C_dom"/>
</dbReference>
<dbReference type="InterPro" id="IPR036676">
    <property type="entry name" value="PurM-like_C_sf"/>
</dbReference>
<dbReference type="InterPro" id="IPR016188">
    <property type="entry name" value="PurM-like_N"/>
</dbReference>
<dbReference type="InterPro" id="IPR036921">
    <property type="entry name" value="PurM-like_N_sf"/>
</dbReference>
<dbReference type="InterPro" id="IPR004733">
    <property type="entry name" value="PurM_cligase"/>
</dbReference>
<dbReference type="NCBIfam" id="TIGR00878">
    <property type="entry name" value="purM"/>
    <property type="match status" value="1"/>
</dbReference>
<dbReference type="PANTHER" id="PTHR10520:SF12">
    <property type="entry name" value="TRIFUNCTIONAL PURINE BIOSYNTHETIC PROTEIN ADENOSINE-3"/>
    <property type="match status" value="1"/>
</dbReference>
<dbReference type="PANTHER" id="PTHR10520">
    <property type="entry name" value="TRIFUNCTIONAL PURINE BIOSYNTHETIC PROTEIN ADENOSINE-3-RELATED"/>
    <property type="match status" value="1"/>
</dbReference>
<dbReference type="Pfam" id="PF00586">
    <property type="entry name" value="AIRS"/>
    <property type="match status" value="1"/>
</dbReference>
<dbReference type="Pfam" id="PF02769">
    <property type="entry name" value="AIRS_C"/>
    <property type="match status" value="1"/>
</dbReference>
<dbReference type="SUPFAM" id="SSF56042">
    <property type="entry name" value="PurM C-terminal domain-like"/>
    <property type="match status" value="1"/>
</dbReference>
<dbReference type="SUPFAM" id="SSF55326">
    <property type="entry name" value="PurM N-terminal domain-like"/>
    <property type="match status" value="1"/>
</dbReference>
<keyword id="KW-0067">ATP-binding</keyword>
<keyword id="KW-0963">Cytoplasm</keyword>
<keyword id="KW-0436">Ligase</keyword>
<keyword id="KW-0547">Nucleotide-binding</keyword>
<keyword id="KW-0658">Purine biosynthesis</keyword>
<evidence type="ECO:0000255" key="1">
    <source>
        <dbReference type="HAMAP-Rule" id="MF_00741"/>
    </source>
</evidence>
<accession>P0DD63</accession>
<accession>Q8K8Y7</accession>
<comment type="catalytic activity">
    <reaction evidence="1">
        <text>2-formamido-N(1)-(5-O-phospho-beta-D-ribosyl)acetamidine + ATP = 5-amino-1-(5-phospho-beta-D-ribosyl)imidazole + ADP + phosphate + H(+)</text>
        <dbReference type="Rhea" id="RHEA:23032"/>
        <dbReference type="ChEBI" id="CHEBI:15378"/>
        <dbReference type="ChEBI" id="CHEBI:30616"/>
        <dbReference type="ChEBI" id="CHEBI:43474"/>
        <dbReference type="ChEBI" id="CHEBI:137981"/>
        <dbReference type="ChEBI" id="CHEBI:147287"/>
        <dbReference type="ChEBI" id="CHEBI:456216"/>
        <dbReference type="EC" id="6.3.3.1"/>
    </reaction>
</comment>
<comment type="pathway">
    <text evidence="1">Purine metabolism; IMP biosynthesis via de novo pathway; 5-amino-1-(5-phospho-D-ribosyl)imidazole from N(2)-formyl-N(1)-(5-phospho-D-ribosyl)glycinamide: step 2/2.</text>
</comment>
<comment type="subcellular location">
    <subcellularLocation>
        <location evidence="1">Cytoplasm</location>
    </subcellularLocation>
</comment>
<comment type="similarity">
    <text evidence="1">Belongs to the AIR synthase family.</text>
</comment>
<organism>
    <name type="scientific">Streptococcus pyogenes serotype M3 (strain SSI-1)</name>
    <dbReference type="NCBI Taxonomy" id="193567"/>
    <lineage>
        <taxon>Bacteria</taxon>
        <taxon>Bacillati</taxon>
        <taxon>Bacillota</taxon>
        <taxon>Bacilli</taxon>
        <taxon>Lactobacillales</taxon>
        <taxon>Streptococcaceae</taxon>
        <taxon>Streptococcus</taxon>
    </lineage>
</organism>
<reference key="1">
    <citation type="journal article" date="2003" name="Genome Res.">
        <title>Genome sequence of an M3 strain of Streptococcus pyogenes reveals a large-scale genomic rearrangement in invasive strains and new insights into phage evolution.</title>
        <authorList>
            <person name="Nakagawa I."/>
            <person name="Kurokawa K."/>
            <person name="Yamashita A."/>
            <person name="Nakata M."/>
            <person name="Tomiyasu Y."/>
            <person name="Okahashi N."/>
            <person name="Kawabata S."/>
            <person name="Yamazaki K."/>
            <person name="Shiba T."/>
            <person name="Yasunaga T."/>
            <person name="Hayashi H."/>
            <person name="Hattori M."/>
            <person name="Hamada S."/>
        </authorList>
    </citation>
    <scope>NUCLEOTIDE SEQUENCE [LARGE SCALE GENOMIC DNA]</scope>
    <source>
        <strain>SSI-1</strain>
    </source>
</reference>
<feature type="chain" id="PRO_0000411471" description="Phosphoribosylformylglycinamidine cyclo-ligase">
    <location>
        <begin position="1"/>
        <end position="340"/>
    </location>
</feature>
<gene>
    <name evidence="1" type="primary">purM</name>
    <name type="ordered locus">SPs0023</name>
</gene>
<proteinExistence type="inferred from homology"/>
<name>PUR5_STRPQ</name>